<gene>
    <name evidence="1" type="primary">mnmG</name>
    <name evidence="1" type="synonym">gidA</name>
    <name type="ordered locus">VV3262</name>
</gene>
<name>MNMG_VIBVY</name>
<protein>
    <recommendedName>
        <fullName evidence="1">tRNA uridine 5-carboxymethylaminomethyl modification enzyme MnmG</fullName>
    </recommendedName>
    <alternativeName>
        <fullName evidence="1">Glucose-inhibited division protein A</fullName>
    </alternativeName>
</protein>
<organism>
    <name type="scientific">Vibrio vulnificus (strain YJ016)</name>
    <dbReference type="NCBI Taxonomy" id="196600"/>
    <lineage>
        <taxon>Bacteria</taxon>
        <taxon>Pseudomonadati</taxon>
        <taxon>Pseudomonadota</taxon>
        <taxon>Gammaproteobacteria</taxon>
        <taxon>Vibrionales</taxon>
        <taxon>Vibrionaceae</taxon>
        <taxon>Vibrio</taxon>
    </lineage>
</organism>
<comment type="function">
    <text evidence="1">NAD-binding protein involved in the addition of a carboxymethylaminomethyl (cmnm) group at the wobble position (U34) of certain tRNAs, forming tRNA-cmnm(5)s(2)U34.</text>
</comment>
<comment type="cofactor">
    <cofactor evidence="1">
        <name>FAD</name>
        <dbReference type="ChEBI" id="CHEBI:57692"/>
    </cofactor>
</comment>
<comment type="subunit">
    <text evidence="1">Homodimer. Heterotetramer of two MnmE and two MnmG subunits.</text>
</comment>
<comment type="subcellular location">
    <subcellularLocation>
        <location evidence="1">Cytoplasm</location>
    </subcellularLocation>
</comment>
<comment type="similarity">
    <text evidence="1">Belongs to the MnmG family.</text>
</comment>
<feature type="chain" id="PRO_0000117212" description="tRNA uridine 5-carboxymethylaminomethyl modification enzyme MnmG">
    <location>
        <begin position="1"/>
        <end position="632"/>
    </location>
</feature>
<feature type="binding site" evidence="1">
    <location>
        <begin position="13"/>
        <end position="18"/>
    </location>
    <ligand>
        <name>FAD</name>
        <dbReference type="ChEBI" id="CHEBI:57692"/>
    </ligand>
</feature>
<feature type="binding site" evidence="1">
    <location>
        <position position="125"/>
    </location>
    <ligand>
        <name>FAD</name>
        <dbReference type="ChEBI" id="CHEBI:57692"/>
    </ligand>
</feature>
<feature type="binding site" evidence="1">
    <location>
        <position position="180"/>
    </location>
    <ligand>
        <name>FAD</name>
        <dbReference type="ChEBI" id="CHEBI:57692"/>
    </ligand>
</feature>
<feature type="binding site" evidence="1">
    <location>
        <begin position="273"/>
        <end position="287"/>
    </location>
    <ligand>
        <name>NAD(+)</name>
        <dbReference type="ChEBI" id="CHEBI:57540"/>
    </ligand>
</feature>
<feature type="binding site" evidence="1">
    <location>
        <position position="370"/>
    </location>
    <ligand>
        <name>FAD</name>
        <dbReference type="ChEBI" id="CHEBI:57692"/>
    </ligand>
</feature>
<accession>Q7MGG9</accession>
<keyword id="KW-0963">Cytoplasm</keyword>
<keyword id="KW-0274">FAD</keyword>
<keyword id="KW-0285">Flavoprotein</keyword>
<keyword id="KW-0520">NAD</keyword>
<keyword id="KW-0819">tRNA processing</keyword>
<dbReference type="EMBL" id="BA000037">
    <property type="protein sequence ID" value="BAC96026.1"/>
    <property type="molecule type" value="Genomic_DNA"/>
</dbReference>
<dbReference type="RefSeq" id="WP_011151445.1">
    <property type="nucleotide sequence ID" value="NC_005139.1"/>
</dbReference>
<dbReference type="SMR" id="Q7MGG9"/>
<dbReference type="STRING" id="672.VV93_v1c29840"/>
<dbReference type="KEGG" id="vvy:VV3262"/>
<dbReference type="eggNOG" id="COG0445">
    <property type="taxonomic scope" value="Bacteria"/>
</dbReference>
<dbReference type="HOGENOM" id="CLU_007831_2_2_6"/>
<dbReference type="Proteomes" id="UP000002675">
    <property type="component" value="Chromosome I"/>
</dbReference>
<dbReference type="GO" id="GO:0005829">
    <property type="term" value="C:cytosol"/>
    <property type="evidence" value="ECO:0007669"/>
    <property type="project" value="TreeGrafter"/>
</dbReference>
<dbReference type="GO" id="GO:0050660">
    <property type="term" value="F:flavin adenine dinucleotide binding"/>
    <property type="evidence" value="ECO:0007669"/>
    <property type="project" value="UniProtKB-UniRule"/>
</dbReference>
<dbReference type="GO" id="GO:0030488">
    <property type="term" value="P:tRNA methylation"/>
    <property type="evidence" value="ECO:0007669"/>
    <property type="project" value="TreeGrafter"/>
</dbReference>
<dbReference type="GO" id="GO:0002098">
    <property type="term" value="P:tRNA wobble uridine modification"/>
    <property type="evidence" value="ECO:0007669"/>
    <property type="project" value="InterPro"/>
</dbReference>
<dbReference type="FunFam" id="1.10.10.1800:FF:000001">
    <property type="entry name" value="tRNA uridine 5-carboxymethylaminomethyl modification enzyme MnmG"/>
    <property type="match status" value="1"/>
</dbReference>
<dbReference type="FunFam" id="1.10.150.570:FF:000001">
    <property type="entry name" value="tRNA uridine 5-carboxymethylaminomethyl modification enzyme MnmG"/>
    <property type="match status" value="1"/>
</dbReference>
<dbReference type="FunFam" id="3.50.50.60:FF:000002">
    <property type="entry name" value="tRNA uridine 5-carboxymethylaminomethyl modification enzyme MnmG"/>
    <property type="match status" value="1"/>
</dbReference>
<dbReference type="FunFam" id="3.50.50.60:FF:000010">
    <property type="entry name" value="tRNA uridine 5-carboxymethylaminomethyl modification enzyme MnmG"/>
    <property type="match status" value="1"/>
</dbReference>
<dbReference type="Gene3D" id="3.50.50.60">
    <property type="entry name" value="FAD/NAD(P)-binding domain"/>
    <property type="match status" value="2"/>
</dbReference>
<dbReference type="Gene3D" id="1.10.150.570">
    <property type="entry name" value="GidA associated domain, C-terminal subdomain"/>
    <property type="match status" value="1"/>
</dbReference>
<dbReference type="Gene3D" id="1.10.10.1800">
    <property type="entry name" value="tRNA uridine 5-carboxymethylaminomethyl modification enzyme MnmG/GidA"/>
    <property type="match status" value="1"/>
</dbReference>
<dbReference type="HAMAP" id="MF_00129">
    <property type="entry name" value="MnmG_GidA"/>
    <property type="match status" value="1"/>
</dbReference>
<dbReference type="InterPro" id="IPR036188">
    <property type="entry name" value="FAD/NAD-bd_sf"/>
</dbReference>
<dbReference type="InterPro" id="IPR049312">
    <property type="entry name" value="GIDA_C_N"/>
</dbReference>
<dbReference type="InterPro" id="IPR004416">
    <property type="entry name" value="MnmG"/>
</dbReference>
<dbReference type="InterPro" id="IPR002218">
    <property type="entry name" value="MnmG-rel"/>
</dbReference>
<dbReference type="InterPro" id="IPR020595">
    <property type="entry name" value="MnmG-rel_CS"/>
</dbReference>
<dbReference type="InterPro" id="IPR026904">
    <property type="entry name" value="MnmG_C"/>
</dbReference>
<dbReference type="InterPro" id="IPR047001">
    <property type="entry name" value="MnmG_C_subdom"/>
</dbReference>
<dbReference type="InterPro" id="IPR044920">
    <property type="entry name" value="MnmG_C_subdom_sf"/>
</dbReference>
<dbReference type="InterPro" id="IPR040131">
    <property type="entry name" value="MnmG_N"/>
</dbReference>
<dbReference type="NCBIfam" id="TIGR00136">
    <property type="entry name" value="mnmG_gidA"/>
    <property type="match status" value="1"/>
</dbReference>
<dbReference type="PANTHER" id="PTHR11806">
    <property type="entry name" value="GLUCOSE INHIBITED DIVISION PROTEIN A"/>
    <property type="match status" value="1"/>
</dbReference>
<dbReference type="PANTHER" id="PTHR11806:SF0">
    <property type="entry name" value="PROTEIN MTO1 HOMOLOG, MITOCHONDRIAL"/>
    <property type="match status" value="1"/>
</dbReference>
<dbReference type="Pfam" id="PF01134">
    <property type="entry name" value="GIDA"/>
    <property type="match status" value="1"/>
</dbReference>
<dbReference type="Pfam" id="PF21680">
    <property type="entry name" value="GIDA_C_1st"/>
    <property type="match status" value="1"/>
</dbReference>
<dbReference type="Pfam" id="PF13932">
    <property type="entry name" value="SAM_GIDA_C"/>
    <property type="match status" value="1"/>
</dbReference>
<dbReference type="SMART" id="SM01228">
    <property type="entry name" value="GIDA_assoc_3"/>
    <property type="match status" value="1"/>
</dbReference>
<dbReference type="SUPFAM" id="SSF51905">
    <property type="entry name" value="FAD/NAD(P)-binding domain"/>
    <property type="match status" value="1"/>
</dbReference>
<dbReference type="PROSITE" id="PS01280">
    <property type="entry name" value="GIDA_1"/>
    <property type="match status" value="1"/>
</dbReference>
<dbReference type="PROSITE" id="PS01281">
    <property type="entry name" value="GIDA_2"/>
    <property type="match status" value="1"/>
</dbReference>
<reference key="1">
    <citation type="journal article" date="2003" name="Genome Res.">
        <title>Comparative genome analysis of Vibrio vulnificus, a marine pathogen.</title>
        <authorList>
            <person name="Chen C.-Y."/>
            <person name="Wu K.-M."/>
            <person name="Chang Y.-C."/>
            <person name="Chang C.-H."/>
            <person name="Tsai H.-C."/>
            <person name="Liao T.-L."/>
            <person name="Liu Y.-M."/>
            <person name="Chen H.-J."/>
            <person name="Shen A.B.-T."/>
            <person name="Li J.-C."/>
            <person name="Su T.-L."/>
            <person name="Shao C.-P."/>
            <person name="Lee C.-T."/>
            <person name="Hor L.-I."/>
            <person name="Tsai S.-F."/>
        </authorList>
    </citation>
    <scope>NUCLEOTIDE SEQUENCE [LARGE SCALE GENOMIC DNA]</scope>
    <source>
        <strain>YJ016</strain>
    </source>
</reference>
<evidence type="ECO:0000255" key="1">
    <source>
        <dbReference type="HAMAP-Rule" id="MF_00129"/>
    </source>
</evidence>
<proteinExistence type="inferred from homology"/>
<sequence>MLYHETFDVIVVGGGHAGTEAALASARTGQKTLLLTHNIDTLGQMSCNPAIGGIGKGHLVKEVDAMGGLMAQAIDHAGIQFRTLNASKGPAVRATRAQADRALYKAYVRDFLENAPNLTLFQQAVDDLIVEQDQVRGVITQMGLKFHAKAVVLTVGTFLGGKIHIGLQSSSGGRAGDPPSIALADRLRELPFRVDRLKTGTPPRIDARSVDFSVLEAQHGDNPTPVFSFMGDRTHHPRQIPCFITHTNEQTHEVIRNNLDRSPMYAGIIEGIGPRYCPSIEDKVMRFADKNSHQIFIEPEGLTTHELYPNGISTSLPFDVQVQIVRSMKGFENAHIVRPGYAIEYDFFDPRDLKQTYETKFIQGLFFAGQINGTTGYEEAAAQGLMAGLNASLFSQEKEGWSPRRDQAYMGVLIDDLSTMGTKEPYRMFTSRAEHRLLLREDNADLRLTEKARELGLVDDARWARFNQKIDNMEQERQRLKSTWMNPASTGIDELNQLLKTPMNREASGEDLLRRPEMTYDQLTSLTAFAPAIDDLEAAEQVEIQVKYEGYIKRQQDEIEKSLRHEHTKLPADLDYSDVKGLSNEVVLKLNTAKPETLGIASRISGITPAAISILLVHLKKIGMLKVGEENA</sequence>